<gene>
    <name type="primary">PER29</name>
    <name type="synonym">P29</name>
    <name type="ordered locus">At3g17070</name>
    <name type="ORF">K14A17.14</name>
    <name type="ORF">K14A17.3</name>
</gene>
<organism>
    <name type="scientific">Arabidopsis thaliana</name>
    <name type="common">Mouse-ear cress</name>
    <dbReference type="NCBI Taxonomy" id="3702"/>
    <lineage>
        <taxon>Eukaryota</taxon>
        <taxon>Viridiplantae</taxon>
        <taxon>Streptophyta</taxon>
        <taxon>Embryophyta</taxon>
        <taxon>Tracheophyta</taxon>
        <taxon>Spermatophyta</taxon>
        <taxon>Magnoliopsida</taxon>
        <taxon>eudicotyledons</taxon>
        <taxon>Gunneridae</taxon>
        <taxon>Pentapetalae</taxon>
        <taxon>rosids</taxon>
        <taxon>malvids</taxon>
        <taxon>Brassicales</taxon>
        <taxon>Brassicaceae</taxon>
        <taxon>Camelineae</taxon>
        <taxon>Arabidopsis</taxon>
    </lineage>
</organism>
<keyword id="KW-0106">Calcium</keyword>
<keyword id="KW-1015">Disulfide bond</keyword>
<keyword id="KW-0325">Glycoprotein</keyword>
<keyword id="KW-0349">Heme</keyword>
<keyword id="KW-0376">Hydrogen peroxide</keyword>
<keyword id="KW-0408">Iron</keyword>
<keyword id="KW-0479">Metal-binding</keyword>
<keyword id="KW-0560">Oxidoreductase</keyword>
<keyword id="KW-0575">Peroxidase</keyword>
<keyword id="KW-1185">Reference proteome</keyword>
<keyword id="KW-0964">Secreted</keyword>
<keyword id="KW-0732">Signal</keyword>
<dbReference type="EC" id="1.11.1.7"/>
<dbReference type="EMBL" id="AB026636">
    <property type="protein sequence ID" value="BAA94985.1"/>
    <property type="status" value="ALT_INIT"/>
    <property type="molecule type" value="Genomic_DNA"/>
</dbReference>
<dbReference type="EMBL" id="CP002686">
    <property type="protein sequence ID" value="AEE75900.1"/>
    <property type="molecule type" value="Genomic_DNA"/>
</dbReference>
<dbReference type="EMBL" id="AY085510">
    <property type="protein sequence ID" value="AAM62734.1"/>
    <property type="molecule type" value="mRNA"/>
</dbReference>
<dbReference type="RefSeq" id="NP_566565.1">
    <property type="nucleotide sequence ID" value="NM_112583.2"/>
</dbReference>
<dbReference type="SMR" id="Q9LSP0"/>
<dbReference type="FunCoup" id="Q9LSP0">
    <property type="interactions" value="136"/>
</dbReference>
<dbReference type="STRING" id="3702.Q9LSP0"/>
<dbReference type="PeroxiBase" id="122">
    <property type="entry name" value="AtPrx29"/>
</dbReference>
<dbReference type="GlyCosmos" id="Q9LSP0">
    <property type="glycosylation" value="1 site, No reported glycans"/>
</dbReference>
<dbReference type="GlyGen" id="Q9LSP0">
    <property type="glycosylation" value="1 site"/>
</dbReference>
<dbReference type="PaxDb" id="3702-AT3G17070.1"/>
<dbReference type="ProteomicsDB" id="236695"/>
<dbReference type="EnsemblPlants" id="AT3G17070.1">
    <property type="protein sequence ID" value="AT3G17070.1"/>
    <property type="gene ID" value="AT3G17070"/>
</dbReference>
<dbReference type="GeneID" id="820964"/>
<dbReference type="Gramene" id="AT3G17070.1">
    <property type="protein sequence ID" value="AT3G17070.1"/>
    <property type="gene ID" value="AT3G17070"/>
</dbReference>
<dbReference type="KEGG" id="ath:AT3G17070"/>
<dbReference type="Araport" id="AT3G17070"/>
<dbReference type="TAIR" id="AT3G17070"/>
<dbReference type="eggNOG" id="ENOG502QPVF">
    <property type="taxonomic scope" value="Eukaryota"/>
</dbReference>
<dbReference type="HOGENOM" id="CLU_010543_0_3_1"/>
<dbReference type="InParanoid" id="Q9LSP0"/>
<dbReference type="OrthoDB" id="2113341at2759"/>
<dbReference type="PhylomeDB" id="Q9LSP0"/>
<dbReference type="BioCyc" id="ARA:AT3G17070-MONOMER"/>
<dbReference type="PRO" id="PR:Q9LSP0"/>
<dbReference type="Proteomes" id="UP000006548">
    <property type="component" value="Chromosome 3"/>
</dbReference>
<dbReference type="ExpressionAtlas" id="Q9LSP0">
    <property type="expression patterns" value="baseline and differential"/>
</dbReference>
<dbReference type="GO" id="GO:0005576">
    <property type="term" value="C:extracellular region"/>
    <property type="evidence" value="ECO:0007669"/>
    <property type="project" value="UniProtKB-SubCell"/>
</dbReference>
<dbReference type="GO" id="GO:0020037">
    <property type="term" value="F:heme binding"/>
    <property type="evidence" value="ECO:0007669"/>
    <property type="project" value="InterPro"/>
</dbReference>
<dbReference type="GO" id="GO:0140825">
    <property type="term" value="F:lactoperoxidase activity"/>
    <property type="evidence" value="ECO:0007669"/>
    <property type="project" value="UniProtKB-EC"/>
</dbReference>
<dbReference type="GO" id="GO:0046872">
    <property type="term" value="F:metal ion binding"/>
    <property type="evidence" value="ECO:0007669"/>
    <property type="project" value="UniProtKB-KW"/>
</dbReference>
<dbReference type="GO" id="GO:0042744">
    <property type="term" value="P:hydrogen peroxide catabolic process"/>
    <property type="evidence" value="ECO:0007669"/>
    <property type="project" value="UniProtKB-KW"/>
</dbReference>
<dbReference type="GO" id="GO:0006979">
    <property type="term" value="P:response to oxidative stress"/>
    <property type="evidence" value="ECO:0007669"/>
    <property type="project" value="InterPro"/>
</dbReference>
<dbReference type="CDD" id="cd00693">
    <property type="entry name" value="secretory_peroxidase"/>
    <property type="match status" value="1"/>
</dbReference>
<dbReference type="FunFam" id="1.10.420.10:FF:000007">
    <property type="entry name" value="Peroxidase"/>
    <property type="match status" value="1"/>
</dbReference>
<dbReference type="Gene3D" id="1.10.520.10">
    <property type="match status" value="1"/>
</dbReference>
<dbReference type="Gene3D" id="1.10.420.10">
    <property type="entry name" value="Peroxidase, domain 2"/>
    <property type="match status" value="1"/>
</dbReference>
<dbReference type="InterPro" id="IPR002016">
    <property type="entry name" value="Haem_peroxidase"/>
</dbReference>
<dbReference type="InterPro" id="IPR010255">
    <property type="entry name" value="Haem_peroxidase_sf"/>
</dbReference>
<dbReference type="InterPro" id="IPR000823">
    <property type="entry name" value="Peroxidase_pln"/>
</dbReference>
<dbReference type="InterPro" id="IPR033905">
    <property type="entry name" value="Secretory_peroxidase"/>
</dbReference>
<dbReference type="PANTHER" id="PTHR31517">
    <property type="match status" value="1"/>
</dbReference>
<dbReference type="PANTHER" id="PTHR31517:SF81">
    <property type="entry name" value="PEROXIDASE"/>
    <property type="match status" value="1"/>
</dbReference>
<dbReference type="Pfam" id="PF00141">
    <property type="entry name" value="peroxidase"/>
    <property type="match status" value="1"/>
</dbReference>
<dbReference type="PRINTS" id="PR00458">
    <property type="entry name" value="PEROXIDASE"/>
</dbReference>
<dbReference type="PRINTS" id="PR00461">
    <property type="entry name" value="PLPEROXIDASE"/>
</dbReference>
<dbReference type="SUPFAM" id="SSF48113">
    <property type="entry name" value="Heme-dependent peroxidases"/>
    <property type="match status" value="1"/>
</dbReference>
<dbReference type="PROSITE" id="PS50873">
    <property type="entry name" value="PEROXIDASE_4"/>
    <property type="match status" value="1"/>
</dbReference>
<feature type="signal peptide" evidence="1">
    <location>
        <begin position="1"/>
        <end position="28"/>
    </location>
</feature>
<feature type="chain" id="PRO_0000023695" description="Peroxidase 29">
    <location>
        <begin position="29"/>
        <end position="339"/>
    </location>
</feature>
<feature type="active site" description="Proton acceptor">
    <location>
        <position position="78"/>
    </location>
</feature>
<feature type="binding site" evidence="2">
    <location>
        <position position="79"/>
    </location>
    <ligand>
        <name>Ca(2+)</name>
        <dbReference type="ChEBI" id="CHEBI:29108"/>
        <label>1</label>
    </ligand>
</feature>
<feature type="binding site" evidence="2">
    <location>
        <position position="82"/>
    </location>
    <ligand>
        <name>Ca(2+)</name>
        <dbReference type="ChEBI" id="CHEBI:29108"/>
        <label>1</label>
    </ligand>
</feature>
<feature type="binding site" evidence="2">
    <location>
        <position position="84"/>
    </location>
    <ligand>
        <name>Ca(2+)</name>
        <dbReference type="ChEBI" id="CHEBI:29108"/>
        <label>1</label>
    </ligand>
</feature>
<feature type="binding site" evidence="2">
    <location>
        <position position="86"/>
    </location>
    <ligand>
        <name>Ca(2+)</name>
        <dbReference type="ChEBI" id="CHEBI:29108"/>
        <label>1</label>
    </ligand>
</feature>
<feature type="binding site" evidence="2">
    <location>
        <position position="88"/>
    </location>
    <ligand>
        <name>Ca(2+)</name>
        <dbReference type="ChEBI" id="CHEBI:29108"/>
        <label>1</label>
    </ligand>
</feature>
<feature type="binding site" evidence="2">
    <location>
        <position position="176"/>
    </location>
    <ligand>
        <name>substrate</name>
    </ligand>
</feature>
<feature type="binding site" description="axial binding residue" evidence="2">
    <location>
        <position position="206"/>
    </location>
    <ligand>
        <name>heme b</name>
        <dbReference type="ChEBI" id="CHEBI:60344"/>
    </ligand>
    <ligandPart>
        <name>Fe</name>
        <dbReference type="ChEBI" id="CHEBI:18248"/>
    </ligandPart>
</feature>
<feature type="binding site" evidence="2">
    <location>
        <position position="207"/>
    </location>
    <ligand>
        <name>Ca(2+)</name>
        <dbReference type="ChEBI" id="CHEBI:29108"/>
        <label>2</label>
    </ligand>
</feature>
<feature type="binding site" evidence="2">
    <location>
        <position position="260"/>
    </location>
    <ligand>
        <name>Ca(2+)</name>
        <dbReference type="ChEBI" id="CHEBI:29108"/>
        <label>2</label>
    </ligand>
</feature>
<feature type="binding site" evidence="2">
    <location>
        <position position="262"/>
    </location>
    <ligand>
        <name>Ca(2+)</name>
        <dbReference type="ChEBI" id="CHEBI:29108"/>
        <label>2</label>
    </ligand>
</feature>
<feature type="binding site" evidence="2">
    <location>
        <position position="267"/>
    </location>
    <ligand>
        <name>Ca(2+)</name>
        <dbReference type="ChEBI" id="CHEBI:29108"/>
        <label>2</label>
    </ligand>
</feature>
<feature type="site" description="Transition state stabilizer" evidence="2">
    <location>
        <position position="74"/>
    </location>
</feature>
<feature type="glycosylation site" description="N-linked (GlcNAc...) asparagine" evidence="1">
    <location>
        <position position="224"/>
    </location>
</feature>
<feature type="disulfide bond" evidence="2">
    <location>
        <begin position="47"/>
        <end position="127"/>
    </location>
</feature>
<feature type="disulfide bond" evidence="2">
    <location>
        <begin position="80"/>
        <end position="85"/>
    </location>
</feature>
<feature type="disulfide bond" evidence="2">
    <location>
        <begin position="133"/>
        <end position="335"/>
    </location>
</feature>
<feature type="disulfide bond" evidence="2">
    <location>
        <begin position="213"/>
        <end position="242"/>
    </location>
</feature>
<accession>Q9LSP0</accession>
<protein>
    <recommendedName>
        <fullName>Peroxidase 29</fullName>
        <shortName>Atperox P29</shortName>
        <ecNumber>1.11.1.7</ecNumber>
    </recommendedName>
    <alternativeName>
        <fullName>ATP40</fullName>
    </alternativeName>
</protein>
<name>PER29_ARATH</name>
<evidence type="ECO:0000255" key="1"/>
<evidence type="ECO:0000255" key="2">
    <source>
        <dbReference type="PROSITE-ProRule" id="PRU00297"/>
    </source>
</evidence>
<evidence type="ECO:0000305" key="3"/>
<comment type="function">
    <text>Removal of H(2)O(2), oxidation of toxic reductants, biosynthesis and degradation of lignin, suberization, auxin catabolism, response to environmental stresses such as wounding, pathogen attack and oxidative stress. These functions might be dependent on each isozyme/isoform in each plant tissue.</text>
</comment>
<comment type="catalytic activity">
    <reaction>
        <text>2 a phenolic donor + H2O2 = 2 a phenolic radical donor + 2 H2O</text>
        <dbReference type="Rhea" id="RHEA:56136"/>
        <dbReference type="ChEBI" id="CHEBI:15377"/>
        <dbReference type="ChEBI" id="CHEBI:16240"/>
        <dbReference type="ChEBI" id="CHEBI:139520"/>
        <dbReference type="ChEBI" id="CHEBI:139521"/>
        <dbReference type="EC" id="1.11.1.7"/>
    </reaction>
</comment>
<comment type="cofactor">
    <cofactor evidence="2">
        <name>heme b</name>
        <dbReference type="ChEBI" id="CHEBI:60344"/>
    </cofactor>
    <text evidence="2">Binds 1 heme b (iron(II)-protoporphyrin IX) group per subunit.</text>
</comment>
<comment type="cofactor">
    <cofactor evidence="2">
        <name>Ca(2+)</name>
        <dbReference type="ChEBI" id="CHEBI:29108"/>
    </cofactor>
    <text evidence="2">Binds 2 calcium ions per subunit.</text>
</comment>
<comment type="subcellular location">
    <subcellularLocation>
        <location evidence="2">Secreted</location>
    </subcellularLocation>
</comment>
<comment type="miscellaneous">
    <text>There are 73 peroxidase genes in A.thaliana.</text>
</comment>
<comment type="similarity">
    <text evidence="2">Belongs to the peroxidase family. Classical plant (class III) peroxidase subfamily.</text>
</comment>
<comment type="sequence caution" evidence="3">
    <conflict type="erroneous initiation">
        <sequence resource="EMBL-CDS" id="BAA94985"/>
    </conflict>
</comment>
<sequence>MKPKSKVAESTAASCFLVMSLLCSCIIGDQMETNNEGLSYSYYEKTCPKVEEIVRSSLSSMFILDPTSPAALLRLMFHDCQVQGCDASILLEPIRDQQFTELDSAKNFGIRKRDLVGSIKTSLELECPKQVSCSDVIILAARDAVALTGGPLISVPLGRKDSLSTPSKHVADSELPPSTADVDTTLSLFANKGMTIEESVAIMGAHTIGVTHCNNVLSRFDNANATSENMDPRFQTFLRVACPEFSPTSQAAEATFVPNDQTSVIFDTAYYDDAIAGRGNLRIDSEIGADPRTRPFVEAFAADQDRFFNAFSSAFVKLSSYKVLTGNEGVIRSVCDKVD</sequence>
<reference key="1">
    <citation type="journal article" date="2000" name="DNA Res.">
        <title>Structural analysis of Arabidopsis thaliana chromosome 3. I. Sequence features of the regions of 4,504,864 bp covered by sixty P1 and TAC clones.</title>
        <authorList>
            <person name="Sato S."/>
            <person name="Nakamura Y."/>
            <person name="Kaneko T."/>
            <person name="Katoh T."/>
            <person name="Asamizu E."/>
            <person name="Tabata S."/>
        </authorList>
    </citation>
    <scope>NUCLEOTIDE SEQUENCE [LARGE SCALE GENOMIC DNA]</scope>
    <source>
        <strain>cv. Columbia</strain>
    </source>
</reference>
<reference key="2">
    <citation type="journal article" date="2017" name="Plant J.">
        <title>Araport11: a complete reannotation of the Arabidopsis thaliana reference genome.</title>
        <authorList>
            <person name="Cheng C.Y."/>
            <person name="Krishnakumar V."/>
            <person name="Chan A.P."/>
            <person name="Thibaud-Nissen F."/>
            <person name="Schobel S."/>
            <person name="Town C.D."/>
        </authorList>
    </citation>
    <scope>GENOME REANNOTATION</scope>
    <source>
        <strain>cv. Columbia</strain>
    </source>
</reference>
<reference key="3">
    <citation type="submission" date="2002-03" db="EMBL/GenBank/DDBJ databases">
        <title>Full-length cDNA from Arabidopsis thaliana.</title>
        <authorList>
            <person name="Brover V.V."/>
            <person name="Troukhan M.E."/>
            <person name="Alexandrov N.A."/>
            <person name="Lu Y.-P."/>
            <person name="Flavell R.B."/>
            <person name="Feldmann K.A."/>
        </authorList>
    </citation>
    <scope>NUCLEOTIDE SEQUENCE [LARGE SCALE MRNA]</scope>
</reference>
<reference key="4">
    <citation type="journal article" date="2002" name="Gene">
        <title>Analysis and expression of the class III peroxidase large gene family in Arabidopsis thaliana.</title>
        <authorList>
            <person name="Tognolli M."/>
            <person name="Penel C."/>
            <person name="Greppin H."/>
            <person name="Simon P."/>
        </authorList>
    </citation>
    <scope>GENE FAMILY ORGANIZATION</scope>
    <scope>NOMENCLATURE</scope>
    <source>
        <strain>cv. Columbia</strain>
    </source>
</reference>
<proteinExistence type="evidence at transcript level"/>